<comment type="function">
    <text evidence="1">Catalyzes a salvage reaction resulting in the formation of AMP, that is energically less costly than de novo synthesis.</text>
</comment>
<comment type="catalytic activity">
    <reaction evidence="1">
        <text>AMP + diphosphate = 5-phospho-alpha-D-ribose 1-diphosphate + adenine</text>
        <dbReference type="Rhea" id="RHEA:16609"/>
        <dbReference type="ChEBI" id="CHEBI:16708"/>
        <dbReference type="ChEBI" id="CHEBI:33019"/>
        <dbReference type="ChEBI" id="CHEBI:58017"/>
        <dbReference type="ChEBI" id="CHEBI:456215"/>
        <dbReference type="EC" id="2.4.2.7"/>
    </reaction>
</comment>
<comment type="pathway">
    <text evidence="1">Purine metabolism; AMP biosynthesis via salvage pathway; AMP from adenine: step 1/1.</text>
</comment>
<comment type="subunit">
    <text evidence="1">Homodimer.</text>
</comment>
<comment type="subcellular location">
    <subcellularLocation>
        <location evidence="1">Cytoplasm</location>
    </subcellularLocation>
</comment>
<comment type="similarity">
    <text evidence="1">Belongs to the purine/pyrimidine phosphoribosyltransferase family.</text>
</comment>
<sequence length="187" mass="20142">MTVSASKTAQQLKYIKDSIKTIPDYPKAGILFRDVTSLLENPKAYSASIKLLSEHYSESGVTKVVGTEARGFLFGAPVALALGVGFVPVRKPGKLPRETISESYELEYGTDTLEIHTDSIQPGDKVLVVDDLLATGGTIEATVKLIRRLGGEVVHAAFIINLPELGGEARLTQQGIHCYSLVSFDGH</sequence>
<evidence type="ECO:0000255" key="1">
    <source>
        <dbReference type="HAMAP-Rule" id="MF_00004"/>
    </source>
</evidence>
<gene>
    <name evidence="1" type="primary">apt</name>
    <name type="ordered locus">YPN_0965</name>
    <name type="ORF">YP516_1046</name>
</gene>
<organism>
    <name type="scientific">Yersinia pestis bv. Antiqua (strain Nepal516)</name>
    <dbReference type="NCBI Taxonomy" id="377628"/>
    <lineage>
        <taxon>Bacteria</taxon>
        <taxon>Pseudomonadati</taxon>
        <taxon>Pseudomonadota</taxon>
        <taxon>Gammaproteobacteria</taxon>
        <taxon>Enterobacterales</taxon>
        <taxon>Yersiniaceae</taxon>
        <taxon>Yersinia</taxon>
    </lineage>
</organism>
<name>APT_YERPN</name>
<keyword id="KW-0963">Cytoplasm</keyword>
<keyword id="KW-0328">Glycosyltransferase</keyword>
<keyword id="KW-0660">Purine salvage</keyword>
<keyword id="KW-0808">Transferase</keyword>
<reference key="1">
    <citation type="journal article" date="2006" name="J. Bacteriol.">
        <title>Complete genome sequence of Yersinia pestis strains Antiqua and Nepal516: evidence of gene reduction in an emerging pathogen.</title>
        <authorList>
            <person name="Chain P.S.G."/>
            <person name="Hu P."/>
            <person name="Malfatti S.A."/>
            <person name="Radnedge L."/>
            <person name="Larimer F."/>
            <person name="Vergez L.M."/>
            <person name="Worsham P."/>
            <person name="Chu M.C."/>
            <person name="Andersen G.L."/>
        </authorList>
    </citation>
    <scope>NUCLEOTIDE SEQUENCE [LARGE SCALE GENOMIC DNA]</scope>
    <source>
        <strain>Nepal516</strain>
    </source>
</reference>
<reference key="2">
    <citation type="submission" date="2009-04" db="EMBL/GenBank/DDBJ databases">
        <title>Yersinia pestis Nepal516A whole genome shotgun sequencing project.</title>
        <authorList>
            <person name="Plunkett G. III"/>
            <person name="Anderson B.D."/>
            <person name="Baumler D.J."/>
            <person name="Burland V."/>
            <person name="Cabot E.L."/>
            <person name="Glasner J.D."/>
            <person name="Mau B."/>
            <person name="Neeno-Eckwall E."/>
            <person name="Perna N.T."/>
            <person name="Munk A.C."/>
            <person name="Tapia R."/>
            <person name="Green L.D."/>
            <person name="Rogers Y.C."/>
            <person name="Detter J.C."/>
            <person name="Bruce D.C."/>
            <person name="Brettin T.S."/>
        </authorList>
    </citation>
    <scope>NUCLEOTIDE SEQUENCE [LARGE SCALE GENOMIC DNA]</scope>
    <source>
        <strain>Nepal516</strain>
    </source>
</reference>
<dbReference type="EC" id="2.4.2.7" evidence="1"/>
<dbReference type="EMBL" id="CP000305">
    <property type="protein sequence ID" value="ABG17297.1"/>
    <property type="molecule type" value="Genomic_DNA"/>
</dbReference>
<dbReference type="EMBL" id="ACNQ01000008">
    <property type="protein sequence ID" value="EEO77384.1"/>
    <property type="molecule type" value="Genomic_DNA"/>
</dbReference>
<dbReference type="RefSeq" id="WP_002208606.1">
    <property type="nucleotide sequence ID" value="NZ_ACNQ01000008.1"/>
</dbReference>
<dbReference type="SMR" id="Q1CL33"/>
<dbReference type="GeneID" id="57975588"/>
<dbReference type="KEGG" id="ypn:YPN_0965"/>
<dbReference type="HOGENOM" id="CLU_063339_3_0_6"/>
<dbReference type="UniPathway" id="UPA00588">
    <property type="reaction ID" value="UER00646"/>
</dbReference>
<dbReference type="Proteomes" id="UP000008936">
    <property type="component" value="Chromosome"/>
</dbReference>
<dbReference type="GO" id="GO:0005829">
    <property type="term" value="C:cytosol"/>
    <property type="evidence" value="ECO:0007669"/>
    <property type="project" value="TreeGrafter"/>
</dbReference>
<dbReference type="GO" id="GO:0003999">
    <property type="term" value="F:adenine phosphoribosyltransferase activity"/>
    <property type="evidence" value="ECO:0007669"/>
    <property type="project" value="UniProtKB-UniRule"/>
</dbReference>
<dbReference type="GO" id="GO:0006168">
    <property type="term" value="P:adenine salvage"/>
    <property type="evidence" value="ECO:0007669"/>
    <property type="project" value="InterPro"/>
</dbReference>
<dbReference type="GO" id="GO:0044209">
    <property type="term" value="P:AMP salvage"/>
    <property type="evidence" value="ECO:0007669"/>
    <property type="project" value="UniProtKB-UniRule"/>
</dbReference>
<dbReference type="GO" id="GO:0006166">
    <property type="term" value="P:purine ribonucleoside salvage"/>
    <property type="evidence" value="ECO:0007669"/>
    <property type="project" value="UniProtKB-KW"/>
</dbReference>
<dbReference type="CDD" id="cd06223">
    <property type="entry name" value="PRTases_typeI"/>
    <property type="match status" value="1"/>
</dbReference>
<dbReference type="FunFam" id="3.40.50.2020:FF:000004">
    <property type="entry name" value="Adenine phosphoribosyltransferase"/>
    <property type="match status" value="1"/>
</dbReference>
<dbReference type="Gene3D" id="3.40.50.2020">
    <property type="match status" value="1"/>
</dbReference>
<dbReference type="HAMAP" id="MF_00004">
    <property type="entry name" value="Aden_phosphoribosyltr"/>
    <property type="match status" value="1"/>
</dbReference>
<dbReference type="InterPro" id="IPR005764">
    <property type="entry name" value="Ade_phspho_trans"/>
</dbReference>
<dbReference type="InterPro" id="IPR050120">
    <property type="entry name" value="Adenine_PRTase"/>
</dbReference>
<dbReference type="InterPro" id="IPR000836">
    <property type="entry name" value="PRibTrfase_dom"/>
</dbReference>
<dbReference type="InterPro" id="IPR029057">
    <property type="entry name" value="PRTase-like"/>
</dbReference>
<dbReference type="NCBIfam" id="TIGR01090">
    <property type="entry name" value="apt"/>
    <property type="match status" value="1"/>
</dbReference>
<dbReference type="NCBIfam" id="NF002632">
    <property type="entry name" value="PRK02304.1-1"/>
    <property type="match status" value="1"/>
</dbReference>
<dbReference type="NCBIfam" id="NF002633">
    <property type="entry name" value="PRK02304.1-2"/>
    <property type="match status" value="1"/>
</dbReference>
<dbReference type="NCBIfam" id="NF002634">
    <property type="entry name" value="PRK02304.1-3"/>
    <property type="match status" value="1"/>
</dbReference>
<dbReference type="NCBIfam" id="NF002636">
    <property type="entry name" value="PRK02304.1-5"/>
    <property type="match status" value="1"/>
</dbReference>
<dbReference type="PANTHER" id="PTHR11776">
    <property type="entry name" value="ADENINE PHOSPHORIBOSYLTRANSFERASE"/>
    <property type="match status" value="1"/>
</dbReference>
<dbReference type="PANTHER" id="PTHR11776:SF7">
    <property type="entry name" value="PHOSPHORIBOSYLTRANSFERASE DOMAIN-CONTAINING PROTEIN"/>
    <property type="match status" value="1"/>
</dbReference>
<dbReference type="Pfam" id="PF00156">
    <property type="entry name" value="Pribosyltran"/>
    <property type="match status" value="1"/>
</dbReference>
<dbReference type="SUPFAM" id="SSF53271">
    <property type="entry name" value="PRTase-like"/>
    <property type="match status" value="1"/>
</dbReference>
<dbReference type="PROSITE" id="PS00103">
    <property type="entry name" value="PUR_PYR_PR_TRANSFER"/>
    <property type="match status" value="1"/>
</dbReference>
<accession>Q1CL33</accession>
<accession>C4GQP3</accession>
<proteinExistence type="inferred from homology"/>
<protein>
    <recommendedName>
        <fullName evidence="1">Adenine phosphoribosyltransferase</fullName>
        <shortName evidence="1">APRT</shortName>
        <ecNumber evidence="1">2.4.2.7</ecNumber>
    </recommendedName>
</protein>
<feature type="chain" id="PRO_1000000376" description="Adenine phosphoribosyltransferase">
    <location>
        <begin position="1"/>
        <end position="187"/>
    </location>
</feature>